<name>ATP6_STRGC</name>
<reference key="1">
    <citation type="journal article" date="2007" name="J. Bacteriol.">
        <title>Genome-wide transcriptional changes in Streptococcus gordonii in response to competence signaling peptide.</title>
        <authorList>
            <person name="Vickerman M.M."/>
            <person name="Iobst S."/>
            <person name="Jesionowski A.M."/>
            <person name="Gill S.R."/>
        </authorList>
    </citation>
    <scope>NUCLEOTIDE SEQUENCE [LARGE SCALE GENOMIC DNA]</scope>
    <source>
        <strain>Challis / ATCC 35105 / BCRC 15272 / CH1 / DL1 / V288</strain>
    </source>
</reference>
<protein>
    <recommendedName>
        <fullName evidence="1">ATP synthase subunit a</fullName>
    </recommendedName>
    <alternativeName>
        <fullName evidence="1">ATP synthase F0 sector subunit a</fullName>
    </alternativeName>
    <alternativeName>
        <fullName evidence="1">F-ATPase subunit 6</fullName>
    </alternativeName>
</protein>
<comment type="function">
    <text evidence="1">Key component of the proton channel; it plays a direct role in the translocation of protons across the membrane.</text>
</comment>
<comment type="subunit">
    <text evidence="1">F-type ATPases have 2 components, CF(1) - the catalytic core - and CF(0) - the membrane proton channel. CF(1) has five subunits: alpha(3), beta(3), gamma(1), delta(1), epsilon(1). CF(0) has three main subunits: a(1), b(2) and c(9-12). The alpha and beta chains form an alternating ring which encloses part of the gamma chain. CF(1) is attached to CF(0) by a central stalk formed by the gamma and epsilon chains, while a peripheral stalk is formed by the delta and b chains.</text>
</comment>
<comment type="subcellular location">
    <subcellularLocation>
        <location evidence="1">Cell membrane</location>
        <topology evidence="1">Multi-pass membrane protein</topology>
    </subcellularLocation>
</comment>
<comment type="similarity">
    <text evidence="1">Belongs to the ATPase A chain family.</text>
</comment>
<proteinExistence type="inferred from homology"/>
<gene>
    <name evidence="1" type="primary">atpB</name>
    <name type="ordered locus">SGO_1547</name>
</gene>
<sequence length="237" mass="26655">MEESVNPTIQLGPVTFNLTLLAMSLLAVLLVFAFVYWASRKMTLKPSGKQNALEYLYDFVIDFTKGNIGSKYMKNYSLFLFSLFLFLVVANNLGLMAKLQTTSGENLWTSPTANIAFDLSMSFLITLICHVEGIRRRGFKKYLKAFVTPGFMTPMNILEEFTNFASLALRIYGNIFAGEVLSGLLVTLSHQAVFYYPLAFGLNLVWTAFSVFISCVQAYVFTMLTSMYLGKKINGEE</sequence>
<dbReference type="EMBL" id="CP000725">
    <property type="protein sequence ID" value="ABV09516.1"/>
    <property type="molecule type" value="Genomic_DNA"/>
</dbReference>
<dbReference type="RefSeq" id="WP_008809482.1">
    <property type="nucleotide sequence ID" value="NC_009785.1"/>
</dbReference>
<dbReference type="SMR" id="A8AYG6"/>
<dbReference type="STRING" id="467705.SGO_1547"/>
<dbReference type="KEGG" id="sgo:SGO_1547"/>
<dbReference type="eggNOG" id="COG0356">
    <property type="taxonomic scope" value="Bacteria"/>
</dbReference>
<dbReference type="HOGENOM" id="CLU_041018_2_3_9"/>
<dbReference type="Proteomes" id="UP000001131">
    <property type="component" value="Chromosome"/>
</dbReference>
<dbReference type="GO" id="GO:0005886">
    <property type="term" value="C:plasma membrane"/>
    <property type="evidence" value="ECO:0007669"/>
    <property type="project" value="UniProtKB-SubCell"/>
</dbReference>
<dbReference type="GO" id="GO:0045259">
    <property type="term" value="C:proton-transporting ATP synthase complex"/>
    <property type="evidence" value="ECO:0007669"/>
    <property type="project" value="UniProtKB-KW"/>
</dbReference>
<dbReference type="GO" id="GO:0046933">
    <property type="term" value="F:proton-transporting ATP synthase activity, rotational mechanism"/>
    <property type="evidence" value="ECO:0007669"/>
    <property type="project" value="UniProtKB-UniRule"/>
</dbReference>
<dbReference type="GO" id="GO:0042777">
    <property type="term" value="P:proton motive force-driven plasma membrane ATP synthesis"/>
    <property type="evidence" value="ECO:0007669"/>
    <property type="project" value="TreeGrafter"/>
</dbReference>
<dbReference type="CDD" id="cd00310">
    <property type="entry name" value="ATP-synt_Fo_a_6"/>
    <property type="match status" value="1"/>
</dbReference>
<dbReference type="Gene3D" id="1.20.120.220">
    <property type="entry name" value="ATP synthase, F0 complex, subunit A"/>
    <property type="match status" value="1"/>
</dbReference>
<dbReference type="HAMAP" id="MF_01393">
    <property type="entry name" value="ATP_synth_a_bact"/>
    <property type="match status" value="1"/>
</dbReference>
<dbReference type="InterPro" id="IPR045082">
    <property type="entry name" value="ATP_syn_F0_a_bact/chloroplast"/>
</dbReference>
<dbReference type="InterPro" id="IPR000568">
    <property type="entry name" value="ATP_synth_F0_asu"/>
</dbReference>
<dbReference type="InterPro" id="IPR035908">
    <property type="entry name" value="F0_ATP_A_sf"/>
</dbReference>
<dbReference type="NCBIfam" id="TIGR01131">
    <property type="entry name" value="ATP_synt_6_or_A"/>
    <property type="match status" value="1"/>
</dbReference>
<dbReference type="NCBIfam" id="NF004479">
    <property type="entry name" value="PRK05815.1-4"/>
    <property type="match status" value="1"/>
</dbReference>
<dbReference type="PANTHER" id="PTHR42823">
    <property type="entry name" value="ATP SYNTHASE SUBUNIT A, CHLOROPLASTIC"/>
    <property type="match status" value="1"/>
</dbReference>
<dbReference type="PANTHER" id="PTHR42823:SF3">
    <property type="entry name" value="ATP SYNTHASE SUBUNIT A, CHLOROPLASTIC"/>
    <property type="match status" value="1"/>
</dbReference>
<dbReference type="Pfam" id="PF00119">
    <property type="entry name" value="ATP-synt_A"/>
    <property type="match status" value="1"/>
</dbReference>
<dbReference type="PRINTS" id="PR00123">
    <property type="entry name" value="ATPASEA"/>
</dbReference>
<dbReference type="SUPFAM" id="SSF81336">
    <property type="entry name" value="F1F0 ATP synthase subunit A"/>
    <property type="match status" value="1"/>
</dbReference>
<keyword id="KW-0066">ATP synthesis</keyword>
<keyword id="KW-1003">Cell membrane</keyword>
<keyword id="KW-0138">CF(0)</keyword>
<keyword id="KW-0375">Hydrogen ion transport</keyword>
<keyword id="KW-0406">Ion transport</keyword>
<keyword id="KW-0472">Membrane</keyword>
<keyword id="KW-1185">Reference proteome</keyword>
<keyword id="KW-0812">Transmembrane</keyword>
<keyword id="KW-1133">Transmembrane helix</keyword>
<keyword id="KW-0813">Transport</keyword>
<feature type="chain" id="PRO_1000145323" description="ATP synthase subunit a">
    <location>
        <begin position="1"/>
        <end position="237"/>
    </location>
</feature>
<feature type="transmembrane region" description="Helical" evidence="1">
    <location>
        <begin position="18"/>
        <end position="38"/>
    </location>
</feature>
<feature type="transmembrane region" description="Helical" evidence="1">
    <location>
        <begin position="77"/>
        <end position="97"/>
    </location>
</feature>
<feature type="transmembrane region" description="Helical" evidence="1">
    <location>
        <begin position="114"/>
        <end position="134"/>
    </location>
</feature>
<feature type="transmembrane region" description="Helical" evidence="1">
    <location>
        <begin position="167"/>
        <end position="187"/>
    </location>
</feature>
<feature type="transmembrane region" description="Helical" evidence="1">
    <location>
        <begin position="208"/>
        <end position="230"/>
    </location>
</feature>
<evidence type="ECO:0000255" key="1">
    <source>
        <dbReference type="HAMAP-Rule" id="MF_01393"/>
    </source>
</evidence>
<organism>
    <name type="scientific">Streptococcus gordonii (strain Challis / ATCC 35105 / BCRC 15272 / CH1 / DL1 / V288)</name>
    <dbReference type="NCBI Taxonomy" id="467705"/>
    <lineage>
        <taxon>Bacteria</taxon>
        <taxon>Bacillati</taxon>
        <taxon>Bacillota</taxon>
        <taxon>Bacilli</taxon>
        <taxon>Lactobacillales</taxon>
        <taxon>Streptococcaceae</taxon>
        <taxon>Streptococcus</taxon>
    </lineage>
</organism>
<accession>A8AYG6</accession>